<organism>
    <name type="scientific">Rattus norvegicus</name>
    <name type="common">Rat</name>
    <dbReference type="NCBI Taxonomy" id="10116"/>
    <lineage>
        <taxon>Eukaryota</taxon>
        <taxon>Metazoa</taxon>
        <taxon>Chordata</taxon>
        <taxon>Craniata</taxon>
        <taxon>Vertebrata</taxon>
        <taxon>Euteleostomi</taxon>
        <taxon>Mammalia</taxon>
        <taxon>Eutheria</taxon>
        <taxon>Euarchontoglires</taxon>
        <taxon>Glires</taxon>
        <taxon>Rodentia</taxon>
        <taxon>Myomorpha</taxon>
        <taxon>Muroidea</taxon>
        <taxon>Muridae</taxon>
        <taxon>Murinae</taxon>
        <taxon>Rattus</taxon>
    </lineage>
</organism>
<accession>Q9EPU7</accession>
<keyword id="KW-0037">Angiogenesis</keyword>
<keyword id="KW-0963">Cytoplasm</keyword>
<keyword id="KW-1017">Isopeptide bond</keyword>
<keyword id="KW-0472">Membrane</keyword>
<keyword id="KW-0479">Metal-binding</keyword>
<keyword id="KW-0539">Nucleus</keyword>
<keyword id="KW-1185">Reference proteome</keyword>
<keyword id="KW-0677">Repeat</keyword>
<keyword id="KW-0678">Repressor</keyword>
<keyword id="KW-0804">Transcription</keyword>
<keyword id="KW-0805">Transcription regulation</keyword>
<keyword id="KW-0832">Ubl conjugation</keyword>
<keyword id="KW-0862">Zinc</keyword>
<keyword id="KW-0863">Zinc-finger</keyword>
<name>Z354C_RAT</name>
<dbReference type="EMBL" id="AF321874">
    <property type="protein sequence ID" value="AAG41994.1"/>
    <property type="molecule type" value="mRNA"/>
</dbReference>
<dbReference type="RefSeq" id="NP_076478.1">
    <property type="nucleotide sequence ID" value="NM_023988.1"/>
</dbReference>
<dbReference type="SMR" id="Q9EPU7"/>
<dbReference type="STRING" id="10116.ENSRNOP00000000248"/>
<dbReference type="PhosphoSitePlus" id="Q9EPU7"/>
<dbReference type="PaxDb" id="10116-ENSRNOP00000000248"/>
<dbReference type="GeneID" id="78972"/>
<dbReference type="KEGG" id="rno:78972"/>
<dbReference type="UCSC" id="RGD:69405">
    <property type="organism name" value="rat"/>
</dbReference>
<dbReference type="AGR" id="RGD:69405"/>
<dbReference type="CTD" id="30944"/>
<dbReference type="RGD" id="69405">
    <property type="gene designation" value="Zfp354c"/>
</dbReference>
<dbReference type="eggNOG" id="KOG1721">
    <property type="taxonomic scope" value="Eukaryota"/>
</dbReference>
<dbReference type="InParanoid" id="Q9EPU7"/>
<dbReference type="OrthoDB" id="6077919at2759"/>
<dbReference type="PhylomeDB" id="Q9EPU7"/>
<dbReference type="Reactome" id="R-RNO-212436">
    <property type="pathway name" value="Generic Transcription Pathway"/>
</dbReference>
<dbReference type="PRO" id="PR:Q9EPU7"/>
<dbReference type="Proteomes" id="UP000002494">
    <property type="component" value="Unplaced"/>
</dbReference>
<dbReference type="GO" id="GO:0005737">
    <property type="term" value="C:cytoplasm"/>
    <property type="evidence" value="ECO:0000250"/>
    <property type="project" value="UniProtKB"/>
</dbReference>
<dbReference type="GO" id="GO:0031965">
    <property type="term" value="C:nuclear membrane"/>
    <property type="evidence" value="ECO:0000250"/>
    <property type="project" value="UniProtKB"/>
</dbReference>
<dbReference type="GO" id="GO:0005634">
    <property type="term" value="C:nucleus"/>
    <property type="evidence" value="ECO:0000250"/>
    <property type="project" value="UniProtKB"/>
</dbReference>
<dbReference type="GO" id="GO:0000981">
    <property type="term" value="F:DNA-binding transcription factor activity, RNA polymerase II-specific"/>
    <property type="evidence" value="ECO:0000318"/>
    <property type="project" value="GO_Central"/>
</dbReference>
<dbReference type="GO" id="GO:0001227">
    <property type="term" value="F:DNA-binding transcription repressor activity, RNA polymerase II-specific"/>
    <property type="evidence" value="ECO:0000250"/>
    <property type="project" value="UniProtKB"/>
</dbReference>
<dbReference type="GO" id="GO:0000978">
    <property type="term" value="F:RNA polymerase II cis-regulatory region sequence-specific DNA binding"/>
    <property type="evidence" value="ECO:0000318"/>
    <property type="project" value="GO_Central"/>
</dbReference>
<dbReference type="GO" id="GO:0008270">
    <property type="term" value="F:zinc ion binding"/>
    <property type="evidence" value="ECO:0007669"/>
    <property type="project" value="UniProtKB-KW"/>
</dbReference>
<dbReference type="GO" id="GO:0001525">
    <property type="term" value="P:angiogenesis"/>
    <property type="evidence" value="ECO:0007669"/>
    <property type="project" value="UniProtKB-KW"/>
</dbReference>
<dbReference type="GO" id="GO:1903671">
    <property type="term" value="P:negative regulation of sprouting angiogenesis"/>
    <property type="evidence" value="ECO:0000250"/>
    <property type="project" value="UniProtKB"/>
</dbReference>
<dbReference type="GO" id="GO:0006357">
    <property type="term" value="P:regulation of transcription by RNA polymerase II"/>
    <property type="evidence" value="ECO:0000318"/>
    <property type="project" value="GO_Central"/>
</dbReference>
<dbReference type="CDD" id="cd07765">
    <property type="entry name" value="KRAB_A-box"/>
    <property type="match status" value="1"/>
</dbReference>
<dbReference type="DisProt" id="DP01555"/>
<dbReference type="FunFam" id="3.30.160.60:FF:000478">
    <property type="entry name" value="Zinc finger protein 133"/>
    <property type="match status" value="2"/>
</dbReference>
<dbReference type="FunFam" id="3.30.160.60:FF:000726">
    <property type="entry name" value="Zinc finger protein 214"/>
    <property type="match status" value="1"/>
</dbReference>
<dbReference type="FunFam" id="3.30.160.60:FF:002343">
    <property type="entry name" value="Zinc finger protein 33A"/>
    <property type="match status" value="1"/>
</dbReference>
<dbReference type="FunFam" id="3.30.160.60:FF:000690">
    <property type="entry name" value="Zinc finger protein 354C"/>
    <property type="match status" value="2"/>
</dbReference>
<dbReference type="FunFam" id="3.30.160.60:FF:001291">
    <property type="entry name" value="Zinc finger protein 354C"/>
    <property type="match status" value="1"/>
</dbReference>
<dbReference type="FunFam" id="3.30.160.60:FF:000016">
    <property type="entry name" value="zinc finger protein 37 homolog"/>
    <property type="match status" value="2"/>
</dbReference>
<dbReference type="FunFam" id="3.30.160.60:FF:001026">
    <property type="entry name" value="zinc finger protein 383"/>
    <property type="match status" value="1"/>
</dbReference>
<dbReference type="FunFam" id="3.30.160.60:FF:002196">
    <property type="entry name" value="zinc finger protein 850-like isoform X3"/>
    <property type="match status" value="1"/>
</dbReference>
<dbReference type="Gene3D" id="6.10.140.140">
    <property type="match status" value="1"/>
</dbReference>
<dbReference type="Gene3D" id="3.30.160.60">
    <property type="entry name" value="Classic Zinc Finger"/>
    <property type="match status" value="11"/>
</dbReference>
<dbReference type="InterPro" id="IPR001909">
    <property type="entry name" value="KRAB"/>
</dbReference>
<dbReference type="InterPro" id="IPR036051">
    <property type="entry name" value="KRAB_dom_sf"/>
</dbReference>
<dbReference type="InterPro" id="IPR036236">
    <property type="entry name" value="Znf_C2H2_sf"/>
</dbReference>
<dbReference type="InterPro" id="IPR013087">
    <property type="entry name" value="Znf_C2H2_type"/>
</dbReference>
<dbReference type="PANTHER" id="PTHR23235:SF178">
    <property type="entry name" value="C2H2-TYPE DOMAIN-CONTAINING PROTEIN-RELATED"/>
    <property type="match status" value="1"/>
</dbReference>
<dbReference type="PANTHER" id="PTHR23235">
    <property type="entry name" value="KRUEPPEL-LIKE TRANSCRIPTION FACTOR"/>
    <property type="match status" value="1"/>
</dbReference>
<dbReference type="Pfam" id="PF01352">
    <property type="entry name" value="KRAB"/>
    <property type="match status" value="1"/>
</dbReference>
<dbReference type="Pfam" id="PF00096">
    <property type="entry name" value="zf-C2H2"/>
    <property type="match status" value="8"/>
</dbReference>
<dbReference type="Pfam" id="PF13465">
    <property type="entry name" value="zf-H2C2_2"/>
    <property type="match status" value="1"/>
</dbReference>
<dbReference type="SMART" id="SM00349">
    <property type="entry name" value="KRAB"/>
    <property type="match status" value="1"/>
</dbReference>
<dbReference type="SMART" id="SM00355">
    <property type="entry name" value="ZnF_C2H2"/>
    <property type="match status" value="11"/>
</dbReference>
<dbReference type="SUPFAM" id="SSF57667">
    <property type="entry name" value="beta-beta-alpha zinc fingers"/>
    <property type="match status" value="6"/>
</dbReference>
<dbReference type="SUPFAM" id="SSF109640">
    <property type="entry name" value="KRAB domain (Kruppel-associated box)"/>
    <property type="match status" value="1"/>
</dbReference>
<dbReference type="PROSITE" id="PS50805">
    <property type="entry name" value="KRAB"/>
    <property type="match status" value="1"/>
</dbReference>
<dbReference type="PROSITE" id="PS00028">
    <property type="entry name" value="ZINC_FINGER_C2H2_1"/>
    <property type="match status" value="11"/>
</dbReference>
<dbReference type="PROSITE" id="PS50157">
    <property type="entry name" value="ZINC_FINGER_C2H2_2"/>
    <property type="match status" value="11"/>
</dbReference>
<reference key="1">
    <citation type="journal article" date="2001" name="J. Biol. Chem.">
        <title>Characterization of a novel KRAB/C2H2 zinc finger transcription factor involved in bone development.</title>
        <authorList>
            <person name="Jheon A.H."/>
            <person name="Ganss B."/>
            <person name="Cheifetz S."/>
            <person name="Sodek J."/>
        </authorList>
    </citation>
    <scope>NUCLEOTIDE SEQUENCE [MRNA]</scope>
    <scope>FUNCTION</scope>
    <scope>SUBCELLULAR LOCATION</scope>
    <scope>TISSUE SPECIFICITY</scope>
    <scope>DEVELOPMENTAL STAGE</scope>
    <scope>INTERACTION WITH RUNX2</scope>
    <source>
        <strain>Wistar</strain>
    </source>
</reference>
<gene>
    <name type="primary">Znf354c</name>
    <name type="synonym">Zfp354c</name>
</gene>
<sequence>MAVDLLAARGTEPVTFRDVAVSFSQDEWLHLDPAQRTLYREVMLENYSNLASLGFQASIPPVIGKLQKGQDPCMEREAPEDTCLDFQIQSEIEASSPEQDVFIEGPSRGLLKNRSTKCAYWKISFGELVKYERLETAQEQEKKAHEPGAASPKEVTSEDGIPTDPELEKPLFMNKALVSQETDPIERVPGMYHTSEKDLPQDFDLMRNFQIYPGQKPYVCSECGKGFSQSLHLLEHKRIHTGEKPYKCSECGKSFSHRSSLLAHQRTHTGEKPYKCSECEKAFGSSSTLIKHLRVHTGEKPYRCRECGKAFSQCSTLTVHQRIHTGEKLYKCAECDKAFNCRAKLHRHQRIHTGEKPYKCAECGKGYSQFPSLAEHQRLHTGGQLCQCLQCGRTFTRVSTLIEHQRIHTGQKPYQCNECGKTFNQYSSFNEHRKIHTGEKLYTCEECGKAFGCKSNLYRHQRIHTGEKPYQCNQCGKAFSQYSFLTEHERIHTGEKLYKCMECGKAYSYRSNLCRHKKVHLKERLYKWKEYGTPFMYGSSLAPHQRCLKGEKPEDLNSSL</sequence>
<evidence type="ECO:0000250" key="1">
    <source>
        <dbReference type="UniProtKB" id="Q571J5"/>
    </source>
</evidence>
<evidence type="ECO:0000250" key="2">
    <source>
        <dbReference type="UniProtKB" id="Q86Y25"/>
    </source>
</evidence>
<evidence type="ECO:0000255" key="3">
    <source>
        <dbReference type="PROSITE-ProRule" id="PRU00042"/>
    </source>
</evidence>
<evidence type="ECO:0000255" key="4">
    <source>
        <dbReference type="PROSITE-ProRule" id="PRU00119"/>
    </source>
</evidence>
<evidence type="ECO:0000256" key="5">
    <source>
        <dbReference type="SAM" id="MobiDB-lite"/>
    </source>
</evidence>
<evidence type="ECO:0000269" key="6">
    <source>
    </source>
</evidence>
<evidence type="ECO:0000305" key="7"/>
<proteinExistence type="evidence at protein level"/>
<comment type="function">
    <text evidence="1 6">Transcriptional repressor that inhibits endothelial angiogenic sprouting (By similarity). Suppresses osteogenic effects of RUNX2 and may be involved in osteoblastic differentiation (PubMed:11278774). Plays a role in postnatal myogenesis, may be involved in the regulation of satellite cells self-renewal (By similarity).</text>
</comment>
<comment type="subunit">
    <text evidence="2 6">Interacts with RUNX2. Binds consensus element OSE2 (PubMed:11278774). Interacts with TRIM28 (By similarity).</text>
</comment>
<comment type="subcellular location">
    <subcellularLocation>
        <location evidence="6">Nucleus</location>
    </subcellularLocation>
    <subcellularLocation>
        <location evidence="2">Nucleus membrane</location>
    </subcellularLocation>
    <subcellularLocation>
        <location evidence="2">Cytoplasm</location>
    </subcellularLocation>
</comment>
<comment type="tissue specificity">
    <text evidence="6">Expressed in brain. Very low expression in adult bone tissues. Overexpression suppresses alkaline phosphatase induction by BMP7.</text>
</comment>
<comment type="developmental stage">
    <text evidence="6">Expressed during osteoblast differentiation and bone development. Detected in embryonic bone formation in calvariae and tibiae. Very low expression in neonate bone tissues. Expressed in kidney and brain.</text>
</comment>
<comment type="domain">
    <text evidence="2 6">KRAB domain is essential for transcriptional repressor activity and ability to inhibit endothelial angiogenic sprouting (By similarity). Not required for nuclear targeting or for DNA binding.</text>
</comment>
<comment type="domain">
    <text evidence="6">Zinc finger region is involved in nuclear targeting and DNA-binding.</text>
</comment>
<comment type="similarity">
    <text evidence="7">Belongs to the krueppel C2H2-type zinc-finger protein family.</text>
</comment>
<protein>
    <recommendedName>
        <fullName>Zinc finger protein 354C</fullName>
    </recommendedName>
    <alternativeName>
        <fullName>Protein AJ18</fullName>
    </alternativeName>
</protein>
<feature type="chain" id="PRO_0000280410" description="Zinc finger protein 354C">
    <location>
        <begin position="1"/>
        <end position="560"/>
    </location>
</feature>
<feature type="domain" description="KRAB" evidence="4">
    <location>
        <begin position="14"/>
        <end position="84"/>
    </location>
</feature>
<feature type="zinc finger region" description="C2H2-type 1" evidence="3">
    <location>
        <begin position="218"/>
        <end position="240"/>
    </location>
</feature>
<feature type="zinc finger region" description="C2H2-type 2" evidence="3">
    <location>
        <begin position="246"/>
        <end position="268"/>
    </location>
</feature>
<feature type="zinc finger region" description="C2H2-type 3" evidence="3">
    <location>
        <begin position="274"/>
        <end position="296"/>
    </location>
</feature>
<feature type="zinc finger region" description="C2H2-type 4" evidence="3">
    <location>
        <begin position="302"/>
        <end position="324"/>
    </location>
</feature>
<feature type="zinc finger region" description="C2H2-type 5" evidence="3">
    <location>
        <begin position="330"/>
        <end position="352"/>
    </location>
</feature>
<feature type="zinc finger region" description="C2H2-type 6" evidence="3">
    <location>
        <begin position="358"/>
        <end position="380"/>
    </location>
</feature>
<feature type="zinc finger region" description="C2H2-type 7" evidence="3">
    <location>
        <begin position="386"/>
        <end position="408"/>
    </location>
</feature>
<feature type="zinc finger region" description="C2H2-type 8" evidence="3">
    <location>
        <begin position="414"/>
        <end position="436"/>
    </location>
</feature>
<feature type="zinc finger region" description="C2H2-type 9" evidence="3">
    <location>
        <begin position="442"/>
        <end position="464"/>
    </location>
</feature>
<feature type="zinc finger region" description="C2H2-type 10" evidence="3">
    <location>
        <begin position="470"/>
        <end position="492"/>
    </location>
</feature>
<feature type="zinc finger region" description="C2H2-type 11" evidence="3">
    <location>
        <begin position="498"/>
        <end position="520"/>
    </location>
</feature>
<feature type="region of interest" description="Disordered" evidence="5">
    <location>
        <begin position="139"/>
        <end position="167"/>
    </location>
</feature>
<feature type="cross-link" description="Glycyl lysine isopeptide (Lys-Gly) (interchain with G-Cter in SUMO2)" evidence="2">
    <location>
        <position position="112"/>
    </location>
</feature>
<feature type="cross-link" description="Glycyl lysine isopeptide (Lys-Gly) (interchain with G-Cter in SUMO2)" evidence="2">
    <location>
        <position position="169"/>
    </location>
</feature>